<evidence type="ECO:0000250" key="1"/>
<evidence type="ECO:0000305" key="2"/>
<dbReference type="EC" id="2.7.4.6"/>
<dbReference type="EMBL" id="D63678">
    <property type="protein sequence ID" value="BAA09829.1"/>
    <property type="molecule type" value="Genomic_DNA"/>
</dbReference>
<dbReference type="EMBL" id="CU329670">
    <property type="protein sequence ID" value="CAB55286.1"/>
    <property type="molecule type" value="Genomic_DNA"/>
</dbReference>
<dbReference type="PIR" id="T39099">
    <property type="entry name" value="T39099"/>
</dbReference>
<dbReference type="RefSeq" id="NP_592857.1">
    <property type="nucleotide sequence ID" value="NM_001018258.2"/>
</dbReference>
<dbReference type="SMR" id="P49740"/>
<dbReference type="BioGRID" id="279543">
    <property type="interactions" value="23"/>
</dbReference>
<dbReference type="FunCoup" id="P49740">
    <property type="interactions" value="528"/>
</dbReference>
<dbReference type="STRING" id="284812.P49740"/>
<dbReference type="iPTMnet" id="P49740"/>
<dbReference type="PaxDb" id="4896-SPAC806.07.1"/>
<dbReference type="EnsemblFungi" id="SPAC806.07.1">
    <property type="protein sequence ID" value="SPAC806.07.1:pep"/>
    <property type="gene ID" value="SPAC806.07"/>
</dbReference>
<dbReference type="GeneID" id="2543111"/>
<dbReference type="KEGG" id="spo:2543111"/>
<dbReference type="PomBase" id="SPAC806.07">
    <property type="gene designation" value="ndk1"/>
</dbReference>
<dbReference type="VEuPathDB" id="FungiDB:SPAC806.07"/>
<dbReference type="eggNOG" id="KOG0888">
    <property type="taxonomic scope" value="Eukaryota"/>
</dbReference>
<dbReference type="HOGENOM" id="CLU_060216_6_3_1"/>
<dbReference type="InParanoid" id="P49740"/>
<dbReference type="OMA" id="NIWFKAD"/>
<dbReference type="PhylomeDB" id="P49740"/>
<dbReference type="Reactome" id="R-SPO-499943">
    <property type="pathway name" value="Interconversion of nucleotide di- and triphosphates"/>
</dbReference>
<dbReference type="Reactome" id="R-SPO-6798695">
    <property type="pathway name" value="Neutrophil degranulation"/>
</dbReference>
<dbReference type="Reactome" id="R-SPO-9748787">
    <property type="pathway name" value="Azathioprine ADME"/>
</dbReference>
<dbReference type="Reactome" id="R-SPO-9755088">
    <property type="pathway name" value="Ribavirin ADME"/>
</dbReference>
<dbReference type="PRO" id="PR:P49740"/>
<dbReference type="Proteomes" id="UP000002485">
    <property type="component" value="Chromosome I"/>
</dbReference>
<dbReference type="GO" id="GO:0005829">
    <property type="term" value="C:cytosol"/>
    <property type="evidence" value="ECO:0007005"/>
    <property type="project" value="PomBase"/>
</dbReference>
<dbReference type="GO" id="GO:0005758">
    <property type="term" value="C:mitochondrial intermembrane space"/>
    <property type="evidence" value="ECO:0000266"/>
    <property type="project" value="PomBase"/>
</dbReference>
<dbReference type="GO" id="GO:0005634">
    <property type="term" value="C:nucleus"/>
    <property type="evidence" value="ECO:0007005"/>
    <property type="project" value="PomBase"/>
</dbReference>
<dbReference type="GO" id="GO:0005524">
    <property type="term" value="F:ATP binding"/>
    <property type="evidence" value="ECO:0007669"/>
    <property type="project" value="UniProtKB-KW"/>
</dbReference>
<dbReference type="GO" id="GO:0046872">
    <property type="term" value="F:metal ion binding"/>
    <property type="evidence" value="ECO:0007669"/>
    <property type="project" value="UniProtKB-KW"/>
</dbReference>
<dbReference type="GO" id="GO:0004550">
    <property type="term" value="F:nucleoside diphosphate kinase activity"/>
    <property type="evidence" value="ECO:0000315"/>
    <property type="project" value="PomBase"/>
</dbReference>
<dbReference type="GO" id="GO:0006241">
    <property type="term" value="P:CTP biosynthetic process"/>
    <property type="evidence" value="ECO:0000315"/>
    <property type="project" value="PomBase"/>
</dbReference>
<dbReference type="GO" id="GO:0006183">
    <property type="term" value="P:GTP biosynthetic process"/>
    <property type="evidence" value="ECO:0007669"/>
    <property type="project" value="InterPro"/>
</dbReference>
<dbReference type="GO" id="GO:0006228">
    <property type="term" value="P:UTP biosynthetic process"/>
    <property type="evidence" value="ECO:0007669"/>
    <property type="project" value="InterPro"/>
</dbReference>
<dbReference type="CDD" id="cd04413">
    <property type="entry name" value="NDPk_I"/>
    <property type="match status" value="1"/>
</dbReference>
<dbReference type="FunFam" id="3.30.70.141:FF:000002">
    <property type="entry name" value="Nucleoside diphosphate kinase"/>
    <property type="match status" value="1"/>
</dbReference>
<dbReference type="Gene3D" id="3.30.70.141">
    <property type="entry name" value="Nucleoside diphosphate kinase-like domain"/>
    <property type="match status" value="1"/>
</dbReference>
<dbReference type="HAMAP" id="MF_00451">
    <property type="entry name" value="NDP_kinase"/>
    <property type="match status" value="1"/>
</dbReference>
<dbReference type="InterPro" id="IPR034907">
    <property type="entry name" value="NDK-like_dom"/>
</dbReference>
<dbReference type="InterPro" id="IPR036850">
    <property type="entry name" value="NDK-like_dom_sf"/>
</dbReference>
<dbReference type="InterPro" id="IPR001564">
    <property type="entry name" value="Nucleoside_diP_kinase"/>
</dbReference>
<dbReference type="InterPro" id="IPR023005">
    <property type="entry name" value="Nucleoside_diP_kinase_AS"/>
</dbReference>
<dbReference type="NCBIfam" id="NF001908">
    <property type="entry name" value="PRK00668.1"/>
    <property type="match status" value="1"/>
</dbReference>
<dbReference type="PANTHER" id="PTHR11349">
    <property type="entry name" value="NUCLEOSIDE DIPHOSPHATE KINASE"/>
    <property type="match status" value="1"/>
</dbReference>
<dbReference type="Pfam" id="PF00334">
    <property type="entry name" value="NDK"/>
    <property type="match status" value="1"/>
</dbReference>
<dbReference type="PRINTS" id="PR01243">
    <property type="entry name" value="NUCDPKINASE"/>
</dbReference>
<dbReference type="SMART" id="SM00562">
    <property type="entry name" value="NDK"/>
    <property type="match status" value="1"/>
</dbReference>
<dbReference type="SUPFAM" id="SSF54919">
    <property type="entry name" value="Nucleoside diphosphate kinase, NDK"/>
    <property type="match status" value="1"/>
</dbReference>
<dbReference type="PROSITE" id="PS00469">
    <property type="entry name" value="NDPK"/>
    <property type="match status" value="1"/>
</dbReference>
<dbReference type="PROSITE" id="PS51374">
    <property type="entry name" value="NDPK_LIKE"/>
    <property type="match status" value="1"/>
</dbReference>
<proteinExistence type="inferred from homology"/>
<name>NDK_SCHPO</name>
<accession>P49740</accession>
<reference key="1">
    <citation type="journal article" date="1995" name="J. Biol. Chem.">
        <title>Cloning and functional analysis of the ndk1 gene encoding nucleoside-diphosphate kinase in Schizosaccharomyces pombe.</title>
        <authorList>
            <person name="Izumiya H."/>
            <person name="Yamamoto M."/>
        </authorList>
    </citation>
    <scope>NUCLEOTIDE SEQUENCE [GENOMIC DNA]</scope>
</reference>
<reference key="2">
    <citation type="journal article" date="2002" name="Nature">
        <title>The genome sequence of Schizosaccharomyces pombe.</title>
        <authorList>
            <person name="Wood V."/>
            <person name="Gwilliam R."/>
            <person name="Rajandream M.A."/>
            <person name="Lyne M.H."/>
            <person name="Lyne R."/>
            <person name="Stewart A."/>
            <person name="Sgouros J.G."/>
            <person name="Peat N."/>
            <person name="Hayles J."/>
            <person name="Baker S.G."/>
            <person name="Basham D."/>
            <person name="Bowman S."/>
            <person name="Brooks K."/>
            <person name="Brown D."/>
            <person name="Brown S."/>
            <person name="Chillingworth T."/>
            <person name="Churcher C.M."/>
            <person name="Collins M."/>
            <person name="Connor R."/>
            <person name="Cronin A."/>
            <person name="Davis P."/>
            <person name="Feltwell T."/>
            <person name="Fraser A."/>
            <person name="Gentles S."/>
            <person name="Goble A."/>
            <person name="Hamlin N."/>
            <person name="Harris D.E."/>
            <person name="Hidalgo J."/>
            <person name="Hodgson G."/>
            <person name="Holroyd S."/>
            <person name="Hornsby T."/>
            <person name="Howarth S."/>
            <person name="Huckle E.J."/>
            <person name="Hunt S."/>
            <person name="Jagels K."/>
            <person name="James K.D."/>
            <person name="Jones L."/>
            <person name="Jones M."/>
            <person name="Leather S."/>
            <person name="McDonald S."/>
            <person name="McLean J."/>
            <person name="Mooney P."/>
            <person name="Moule S."/>
            <person name="Mungall K.L."/>
            <person name="Murphy L.D."/>
            <person name="Niblett D."/>
            <person name="Odell C."/>
            <person name="Oliver K."/>
            <person name="O'Neil S."/>
            <person name="Pearson D."/>
            <person name="Quail M.A."/>
            <person name="Rabbinowitsch E."/>
            <person name="Rutherford K.M."/>
            <person name="Rutter S."/>
            <person name="Saunders D."/>
            <person name="Seeger K."/>
            <person name="Sharp S."/>
            <person name="Skelton J."/>
            <person name="Simmonds M.N."/>
            <person name="Squares R."/>
            <person name="Squares S."/>
            <person name="Stevens K."/>
            <person name="Taylor K."/>
            <person name="Taylor R.G."/>
            <person name="Tivey A."/>
            <person name="Walsh S.V."/>
            <person name="Warren T."/>
            <person name="Whitehead S."/>
            <person name="Woodward J.R."/>
            <person name="Volckaert G."/>
            <person name="Aert R."/>
            <person name="Robben J."/>
            <person name="Grymonprez B."/>
            <person name="Weltjens I."/>
            <person name="Vanstreels E."/>
            <person name="Rieger M."/>
            <person name="Schaefer M."/>
            <person name="Mueller-Auer S."/>
            <person name="Gabel C."/>
            <person name="Fuchs M."/>
            <person name="Duesterhoeft A."/>
            <person name="Fritzc C."/>
            <person name="Holzer E."/>
            <person name="Moestl D."/>
            <person name="Hilbert H."/>
            <person name="Borzym K."/>
            <person name="Langer I."/>
            <person name="Beck A."/>
            <person name="Lehrach H."/>
            <person name="Reinhardt R."/>
            <person name="Pohl T.M."/>
            <person name="Eger P."/>
            <person name="Zimmermann W."/>
            <person name="Wedler H."/>
            <person name="Wambutt R."/>
            <person name="Purnelle B."/>
            <person name="Goffeau A."/>
            <person name="Cadieu E."/>
            <person name="Dreano S."/>
            <person name="Gloux S."/>
            <person name="Lelaure V."/>
            <person name="Mottier S."/>
            <person name="Galibert F."/>
            <person name="Aves S.J."/>
            <person name="Xiang Z."/>
            <person name="Hunt C."/>
            <person name="Moore K."/>
            <person name="Hurst S.M."/>
            <person name="Lucas M."/>
            <person name="Rochet M."/>
            <person name="Gaillardin C."/>
            <person name="Tallada V.A."/>
            <person name="Garzon A."/>
            <person name="Thode G."/>
            <person name="Daga R.R."/>
            <person name="Cruzado L."/>
            <person name="Jimenez J."/>
            <person name="Sanchez M."/>
            <person name="del Rey F."/>
            <person name="Benito J."/>
            <person name="Dominguez A."/>
            <person name="Revuelta J.L."/>
            <person name="Moreno S."/>
            <person name="Armstrong J."/>
            <person name="Forsburg S.L."/>
            <person name="Cerutti L."/>
            <person name="Lowe T."/>
            <person name="McCombie W.R."/>
            <person name="Paulsen I."/>
            <person name="Potashkin J."/>
            <person name="Shpakovski G.V."/>
            <person name="Ussery D."/>
            <person name="Barrell B.G."/>
            <person name="Nurse P."/>
        </authorList>
    </citation>
    <scope>NUCLEOTIDE SEQUENCE [LARGE SCALE GENOMIC DNA]</scope>
    <source>
        <strain>972 / ATCC 24843</strain>
    </source>
</reference>
<protein>
    <recommendedName>
        <fullName>Nucleoside diphosphate kinase</fullName>
        <shortName>NDK</shortName>
        <shortName>NDP kinase</shortName>
        <ecNumber>2.7.4.6</ecNumber>
    </recommendedName>
</protein>
<comment type="function">
    <text>Major role in the synthesis of nucleoside triphosphates other than ATP. The ATP gamma phosphate is transferred to the NDP beta phosphate via a ping-pong mechanism, using a phosphorylated active-site intermediate.</text>
</comment>
<comment type="catalytic activity">
    <reaction>
        <text>a 2'-deoxyribonucleoside 5'-diphosphate + ATP = a 2'-deoxyribonucleoside 5'-triphosphate + ADP</text>
        <dbReference type="Rhea" id="RHEA:44640"/>
        <dbReference type="ChEBI" id="CHEBI:30616"/>
        <dbReference type="ChEBI" id="CHEBI:61560"/>
        <dbReference type="ChEBI" id="CHEBI:73316"/>
        <dbReference type="ChEBI" id="CHEBI:456216"/>
        <dbReference type="EC" id="2.7.4.6"/>
    </reaction>
</comment>
<comment type="catalytic activity">
    <reaction>
        <text>a ribonucleoside 5'-diphosphate + ATP = a ribonucleoside 5'-triphosphate + ADP</text>
        <dbReference type="Rhea" id="RHEA:18113"/>
        <dbReference type="ChEBI" id="CHEBI:30616"/>
        <dbReference type="ChEBI" id="CHEBI:57930"/>
        <dbReference type="ChEBI" id="CHEBI:61557"/>
        <dbReference type="ChEBI" id="CHEBI:456216"/>
        <dbReference type="EC" id="2.7.4.6"/>
    </reaction>
</comment>
<comment type="cofactor">
    <cofactor evidence="1">
        <name>Mg(2+)</name>
        <dbReference type="ChEBI" id="CHEBI:18420"/>
    </cofactor>
</comment>
<comment type="subunit">
    <text evidence="1">Homotrimer.</text>
</comment>
<comment type="similarity">
    <text evidence="2">Belongs to the NDK family.</text>
</comment>
<sequence>MSTEQTFIAVKPDAVQRGLIGYIISKFELKGYKLRALKFLVPSRDLVEEHYAEHKGKPFYEKLVGFMASGPVCAMIWEGKQAVKTGRLMLGASNPLDSAPGTIRGDYGIDLGRNVCHGSDSIESANREIKLWFQPSEIQVYDRTIEPWIYE</sequence>
<feature type="chain" id="PRO_0000137152" description="Nucleoside diphosphate kinase">
    <location>
        <begin position="1"/>
        <end position="151"/>
    </location>
</feature>
<feature type="active site" description="Pros-phosphohistidine intermediate" evidence="1">
    <location>
        <position position="117"/>
    </location>
</feature>
<feature type="binding site" evidence="1">
    <location>
        <position position="11"/>
    </location>
    <ligand>
        <name>ATP</name>
        <dbReference type="ChEBI" id="CHEBI:30616"/>
    </ligand>
</feature>
<feature type="binding site" evidence="1">
    <location>
        <position position="59"/>
    </location>
    <ligand>
        <name>ATP</name>
        <dbReference type="ChEBI" id="CHEBI:30616"/>
    </ligand>
</feature>
<feature type="binding site" evidence="1">
    <location>
        <position position="87"/>
    </location>
    <ligand>
        <name>ATP</name>
        <dbReference type="ChEBI" id="CHEBI:30616"/>
    </ligand>
</feature>
<feature type="binding site" evidence="1">
    <location>
        <position position="104"/>
    </location>
    <ligand>
        <name>ATP</name>
        <dbReference type="ChEBI" id="CHEBI:30616"/>
    </ligand>
</feature>
<feature type="binding site" evidence="1">
    <location>
        <position position="114"/>
    </location>
    <ligand>
        <name>ATP</name>
        <dbReference type="ChEBI" id="CHEBI:30616"/>
    </ligand>
</feature>
<keyword id="KW-0067">ATP-binding</keyword>
<keyword id="KW-0418">Kinase</keyword>
<keyword id="KW-0460">Magnesium</keyword>
<keyword id="KW-0479">Metal-binding</keyword>
<keyword id="KW-0546">Nucleotide metabolism</keyword>
<keyword id="KW-0547">Nucleotide-binding</keyword>
<keyword id="KW-0597">Phosphoprotein</keyword>
<keyword id="KW-1185">Reference proteome</keyword>
<keyword id="KW-0808">Transferase</keyword>
<gene>
    <name type="primary">ndk1</name>
    <name type="ORF">SPAC806.07</name>
</gene>
<organism>
    <name type="scientific">Schizosaccharomyces pombe (strain 972 / ATCC 24843)</name>
    <name type="common">Fission yeast</name>
    <dbReference type="NCBI Taxonomy" id="284812"/>
    <lineage>
        <taxon>Eukaryota</taxon>
        <taxon>Fungi</taxon>
        <taxon>Dikarya</taxon>
        <taxon>Ascomycota</taxon>
        <taxon>Taphrinomycotina</taxon>
        <taxon>Schizosaccharomycetes</taxon>
        <taxon>Schizosaccharomycetales</taxon>
        <taxon>Schizosaccharomycetaceae</taxon>
        <taxon>Schizosaccharomyces</taxon>
    </lineage>
</organism>